<gene>
    <name evidence="1" type="primary">psbJ</name>
    <name type="ordered locus">CYA_2427</name>
</gene>
<dbReference type="EMBL" id="CP000239">
    <property type="protein sequence ID" value="ABD00549.1"/>
    <property type="molecule type" value="Genomic_DNA"/>
</dbReference>
<dbReference type="RefSeq" id="WP_011431222.1">
    <property type="nucleotide sequence ID" value="NC_007775.1"/>
</dbReference>
<dbReference type="SMR" id="Q2JS37"/>
<dbReference type="STRING" id="321327.CYA_2427"/>
<dbReference type="KEGG" id="cya:CYA_2427"/>
<dbReference type="eggNOG" id="ENOG5033ABP">
    <property type="taxonomic scope" value="Bacteria"/>
</dbReference>
<dbReference type="HOGENOM" id="CLU_215151_0_0_3"/>
<dbReference type="Proteomes" id="UP000008818">
    <property type="component" value="Chromosome"/>
</dbReference>
<dbReference type="GO" id="GO:0009539">
    <property type="term" value="C:photosystem II reaction center"/>
    <property type="evidence" value="ECO:0007669"/>
    <property type="project" value="InterPro"/>
</dbReference>
<dbReference type="GO" id="GO:0031676">
    <property type="term" value="C:plasma membrane-derived thylakoid membrane"/>
    <property type="evidence" value="ECO:0007669"/>
    <property type="project" value="UniProtKB-SubCell"/>
</dbReference>
<dbReference type="GO" id="GO:0015979">
    <property type="term" value="P:photosynthesis"/>
    <property type="evidence" value="ECO:0007669"/>
    <property type="project" value="UniProtKB-UniRule"/>
</dbReference>
<dbReference type="Gene3D" id="6.10.250.2070">
    <property type="match status" value="1"/>
</dbReference>
<dbReference type="HAMAP" id="MF_01305">
    <property type="entry name" value="PSII_PsbJ"/>
    <property type="match status" value="1"/>
</dbReference>
<dbReference type="InterPro" id="IPR002682">
    <property type="entry name" value="PSII_PsbJ"/>
</dbReference>
<dbReference type="InterPro" id="IPR037267">
    <property type="entry name" value="PSII_PsbJ_sf"/>
</dbReference>
<dbReference type="NCBIfam" id="NF002722">
    <property type="entry name" value="PRK02565.1"/>
    <property type="match status" value="1"/>
</dbReference>
<dbReference type="PANTHER" id="PTHR34812">
    <property type="entry name" value="PHOTOSYSTEM II REACTION CENTER PROTEIN J"/>
    <property type="match status" value="1"/>
</dbReference>
<dbReference type="PANTHER" id="PTHR34812:SF3">
    <property type="entry name" value="PHOTOSYSTEM II REACTION CENTER PROTEIN J"/>
    <property type="match status" value="1"/>
</dbReference>
<dbReference type="Pfam" id="PF01788">
    <property type="entry name" value="PsbJ"/>
    <property type="match status" value="1"/>
</dbReference>
<dbReference type="SUPFAM" id="SSF161021">
    <property type="entry name" value="Photosystem II reaction center protein J, PsbJ"/>
    <property type="match status" value="1"/>
</dbReference>
<name>PSBJ_SYNJA</name>
<protein>
    <recommendedName>
        <fullName evidence="1">Photosystem II reaction center protein J</fullName>
        <shortName evidence="1">PSII-J</shortName>
    </recommendedName>
</protein>
<comment type="function">
    <text evidence="1">One of the components of the core complex of photosystem II (PSII). PSII is a light-driven water:plastoquinone oxidoreductase that uses light energy to abstract electrons from H(2)O, generating O(2) and a proton gradient subsequently used for ATP formation. It consists of a core antenna complex that captures photons, and an electron transfer chain that converts photonic excitation into a charge separation.</text>
</comment>
<comment type="subunit">
    <text evidence="1">PSII is composed of 1 copy each of membrane proteins PsbA, PsbB, PsbC, PsbD, PsbE, PsbF, PsbH, PsbI, PsbJ, PsbK, PsbL, PsbM, PsbT, PsbX, PsbY, PsbZ, Psb30/Ycf12, peripheral proteins PsbO, CyanoQ (PsbQ), PsbU, PsbV and a large number of cofactors. It forms dimeric complexes.</text>
</comment>
<comment type="subcellular location">
    <subcellularLocation>
        <location evidence="1">Cellular thylakoid membrane</location>
        <topology evidence="1">Single-pass membrane protein</topology>
    </subcellularLocation>
</comment>
<comment type="similarity">
    <text evidence="1">Belongs to the PsbJ family.</text>
</comment>
<organism>
    <name type="scientific">Synechococcus sp. (strain JA-3-3Ab)</name>
    <name type="common">Cyanobacteria bacterium Yellowstone A-Prime</name>
    <dbReference type="NCBI Taxonomy" id="321327"/>
    <lineage>
        <taxon>Bacteria</taxon>
        <taxon>Bacillati</taxon>
        <taxon>Cyanobacteriota</taxon>
        <taxon>Cyanophyceae</taxon>
        <taxon>Synechococcales</taxon>
        <taxon>Synechococcaceae</taxon>
        <taxon>Synechococcus</taxon>
    </lineage>
</organism>
<keyword id="KW-0472">Membrane</keyword>
<keyword id="KW-0602">Photosynthesis</keyword>
<keyword id="KW-0604">Photosystem II</keyword>
<keyword id="KW-0674">Reaction center</keyword>
<keyword id="KW-0793">Thylakoid</keyword>
<keyword id="KW-0812">Transmembrane</keyword>
<keyword id="KW-1133">Transmembrane helix</keyword>
<accession>Q2JS37</accession>
<reference key="1">
    <citation type="journal article" date="2007" name="ISME J.">
        <title>Population level functional diversity in a microbial community revealed by comparative genomic and metagenomic analyses.</title>
        <authorList>
            <person name="Bhaya D."/>
            <person name="Grossman A.R."/>
            <person name="Steunou A.-S."/>
            <person name="Khuri N."/>
            <person name="Cohan F.M."/>
            <person name="Hamamura N."/>
            <person name="Melendrez M.C."/>
            <person name="Bateson M.M."/>
            <person name="Ward D.M."/>
            <person name="Heidelberg J.F."/>
        </authorList>
    </citation>
    <scope>NUCLEOTIDE SEQUENCE [LARGE SCALE GENOMIC DNA]</scope>
    <source>
        <strain>JA-3-3Ab</strain>
    </source>
</reference>
<evidence type="ECO:0000255" key="1">
    <source>
        <dbReference type="HAMAP-Rule" id="MF_01305"/>
    </source>
</evidence>
<feature type="chain" id="PRO_0000292239" description="Photosystem II reaction center protein J">
    <location>
        <begin position="1"/>
        <end position="39"/>
    </location>
</feature>
<feature type="transmembrane region" description="Helical" evidence="1">
    <location>
        <begin position="7"/>
        <end position="27"/>
    </location>
</feature>
<proteinExistence type="inferred from homology"/>
<sequence>MTSQARIPLWIVAVVVGLGVVTVVGLFFYGSYTGLGAPV</sequence>